<organism>
    <name type="scientific">Salmonella agona (strain SL483)</name>
    <dbReference type="NCBI Taxonomy" id="454166"/>
    <lineage>
        <taxon>Bacteria</taxon>
        <taxon>Pseudomonadati</taxon>
        <taxon>Pseudomonadota</taxon>
        <taxon>Gammaproteobacteria</taxon>
        <taxon>Enterobacterales</taxon>
        <taxon>Enterobacteriaceae</taxon>
        <taxon>Salmonella</taxon>
    </lineage>
</organism>
<feature type="chain" id="PRO_1000130775" description="RNase adapter protein RapZ">
    <location>
        <begin position="1"/>
        <end position="284"/>
    </location>
</feature>
<feature type="region of interest" description="RNA-binding" evidence="1">
    <location>
        <begin position="266"/>
        <end position="284"/>
    </location>
</feature>
<feature type="binding site" evidence="1">
    <location>
        <begin position="8"/>
        <end position="15"/>
    </location>
    <ligand>
        <name>ATP</name>
        <dbReference type="ChEBI" id="CHEBI:30616"/>
    </ligand>
</feature>
<feature type="binding site" evidence="1">
    <location>
        <begin position="56"/>
        <end position="59"/>
    </location>
    <ligand>
        <name>GTP</name>
        <dbReference type="ChEBI" id="CHEBI:37565"/>
    </ligand>
</feature>
<gene>
    <name evidence="1" type="primary">rapZ</name>
    <name type="ordered locus">SeAg_B3513</name>
</gene>
<accession>B5F6X4</accession>
<proteinExistence type="inferred from homology"/>
<reference key="1">
    <citation type="journal article" date="2011" name="J. Bacteriol.">
        <title>Comparative genomics of 28 Salmonella enterica isolates: evidence for CRISPR-mediated adaptive sublineage evolution.</title>
        <authorList>
            <person name="Fricke W.F."/>
            <person name="Mammel M.K."/>
            <person name="McDermott P.F."/>
            <person name="Tartera C."/>
            <person name="White D.G."/>
            <person name="Leclerc J.E."/>
            <person name="Ravel J."/>
            <person name="Cebula T.A."/>
        </authorList>
    </citation>
    <scope>NUCLEOTIDE SEQUENCE [LARGE SCALE GENOMIC DNA]</scope>
    <source>
        <strain>SL483</strain>
    </source>
</reference>
<keyword id="KW-0067">ATP-binding</keyword>
<keyword id="KW-0342">GTP-binding</keyword>
<keyword id="KW-0547">Nucleotide-binding</keyword>
<keyword id="KW-0694">RNA-binding</keyword>
<comment type="function">
    <text evidence="1">Modulates the synthesis of GlmS, by affecting the processing and stability of the regulatory small RNA GlmZ. When glucosamine-6-phosphate (GlcN6P) concentrations are high in the cell, RapZ binds GlmZ and targets it to cleavage by RNase E. Consequently, GlmZ is inactivated and unable to activate GlmS synthesis. Under low GlcN6P concentrations, RapZ is sequestered and inactivated by an other regulatory small RNA, GlmY, preventing GlmZ degradation and leading to synthesis of GlmS.</text>
</comment>
<comment type="subunit">
    <text evidence="1">Homotrimer.</text>
</comment>
<comment type="similarity">
    <text evidence="1">Belongs to the RapZ-like family. RapZ subfamily.</text>
</comment>
<dbReference type="EMBL" id="CP001138">
    <property type="protein sequence ID" value="ACH49664.1"/>
    <property type="molecule type" value="Genomic_DNA"/>
</dbReference>
<dbReference type="RefSeq" id="WP_000243749.1">
    <property type="nucleotide sequence ID" value="NC_011149.1"/>
</dbReference>
<dbReference type="SMR" id="B5F6X4"/>
<dbReference type="KEGG" id="sea:SeAg_B3513"/>
<dbReference type="HOGENOM" id="CLU_059558_1_1_6"/>
<dbReference type="Proteomes" id="UP000008819">
    <property type="component" value="Chromosome"/>
</dbReference>
<dbReference type="GO" id="GO:0005524">
    <property type="term" value="F:ATP binding"/>
    <property type="evidence" value="ECO:0007669"/>
    <property type="project" value="UniProtKB-UniRule"/>
</dbReference>
<dbReference type="GO" id="GO:0005525">
    <property type="term" value="F:GTP binding"/>
    <property type="evidence" value="ECO:0007669"/>
    <property type="project" value="UniProtKB-UniRule"/>
</dbReference>
<dbReference type="GO" id="GO:0003723">
    <property type="term" value="F:RNA binding"/>
    <property type="evidence" value="ECO:0007669"/>
    <property type="project" value="UniProtKB-KW"/>
</dbReference>
<dbReference type="Gene3D" id="3.40.50.300">
    <property type="entry name" value="P-loop containing nucleotide triphosphate hydrolases"/>
    <property type="match status" value="1"/>
</dbReference>
<dbReference type="HAMAP" id="MF_00636">
    <property type="entry name" value="RapZ_like"/>
    <property type="match status" value="1"/>
</dbReference>
<dbReference type="InterPro" id="IPR027417">
    <property type="entry name" value="P-loop_NTPase"/>
</dbReference>
<dbReference type="InterPro" id="IPR005337">
    <property type="entry name" value="RapZ-like"/>
</dbReference>
<dbReference type="InterPro" id="IPR053930">
    <property type="entry name" value="RapZ-like_N"/>
</dbReference>
<dbReference type="InterPro" id="IPR053931">
    <property type="entry name" value="RapZ_C"/>
</dbReference>
<dbReference type="NCBIfam" id="NF003828">
    <property type="entry name" value="PRK05416.1"/>
    <property type="match status" value="1"/>
</dbReference>
<dbReference type="PANTHER" id="PTHR30448">
    <property type="entry name" value="RNASE ADAPTER PROTEIN RAPZ"/>
    <property type="match status" value="1"/>
</dbReference>
<dbReference type="PANTHER" id="PTHR30448:SF0">
    <property type="entry name" value="RNASE ADAPTER PROTEIN RAPZ"/>
    <property type="match status" value="1"/>
</dbReference>
<dbReference type="Pfam" id="PF22740">
    <property type="entry name" value="PapZ_C"/>
    <property type="match status" value="1"/>
</dbReference>
<dbReference type="Pfam" id="PF03668">
    <property type="entry name" value="RapZ-like_N"/>
    <property type="match status" value="1"/>
</dbReference>
<dbReference type="PIRSF" id="PIRSF005052">
    <property type="entry name" value="P-loopkin"/>
    <property type="match status" value="1"/>
</dbReference>
<dbReference type="SUPFAM" id="SSF52540">
    <property type="entry name" value="P-loop containing nucleoside triphosphate hydrolases"/>
    <property type="match status" value="1"/>
</dbReference>
<name>RAPZ_SALA4</name>
<sequence length="284" mass="32464">MVLMIVSGRSGSGKSVALRALEDMGFYCVDNLPVVLLPDLARTLADRQISAAVSIDVRNMPESPEIFEQAMNNLPGAFSPQLLFLDADRNTLIRRYSDTRRLHPLSSKNLSLESAIDKESDLLEPLRSRADLIVDTSEMSVHELAEMLRTRLLGKRERELTMVFESFGFKHGIPIDADYVFDVRFLPNPHWDPKLRPMTGLDKPVAAFLDRHTEVHNFIYQTRSYLELWLPMLETNNRSYLTVAIGCTGGKHRSVYIAEQLADYFRSRGKNVQSRHRTLEKRKT</sequence>
<evidence type="ECO:0000255" key="1">
    <source>
        <dbReference type="HAMAP-Rule" id="MF_00636"/>
    </source>
</evidence>
<protein>
    <recommendedName>
        <fullName evidence="1">RNase adapter protein RapZ</fullName>
    </recommendedName>
</protein>